<feature type="chain" id="PRO_0000135617" description="67 kDa serum albumin">
    <location>
        <begin position="1"/>
        <end position="40" status="greater than"/>
    </location>
</feature>
<feature type="domain" description="Albumin" evidence="2">
    <location>
        <begin position="1"/>
        <end position="40" status="greater than"/>
    </location>
</feature>
<feature type="binding site" evidence="1">
    <location>
        <position position="4"/>
    </location>
    <ligand>
        <name>Cu cation</name>
        <dbReference type="ChEBI" id="CHEBI:23378"/>
    </ligand>
</feature>
<feature type="non-terminal residue">
    <location>
        <position position="40"/>
    </location>
</feature>
<reference key="1">
    <citation type="journal article" date="1997" name="Comp. Biochem. Physiol.">
        <title>Purification and partial amino acid sequences of two distinct albumins from turtle plasma.</title>
        <authorList>
            <person name="Brown M.A."/>
            <person name="Chambers G.K."/>
            <person name="Licht P."/>
        </authorList>
    </citation>
    <scope>PROTEIN SEQUENCE</scope>
</reference>
<reference key="2">
    <citation type="journal article" date="1995" name="Gen. Comp. Endocrinol.">
        <title>Estrogen downregulation of albumin and a 170-kDa serum protein in the turtle, Trachemys scripta.</title>
        <authorList>
            <person name="Selcer K.W."/>
            <person name="Palmer B.D."/>
        </authorList>
    </citation>
    <scope>PROTEIN SEQUENCE OF 1-8</scope>
</reference>
<protein>
    <recommendedName>
        <fullName>67 kDa serum albumin</fullName>
    </recommendedName>
    <alternativeName>
        <fullName>Alb-1</fullName>
    </alternativeName>
</protein>
<dbReference type="SMR" id="P81188"/>
<dbReference type="GO" id="GO:0005615">
    <property type="term" value="C:extracellular space"/>
    <property type="evidence" value="ECO:0007669"/>
    <property type="project" value="InterPro"/>
</dbReference>
<dbReference type="GO" id="GO:0008289">
    <property type="term" value="F:lipid binding"/>
    <property type="evidence" value="ECO:0007669"/>
    <property type="project" value="UniProtKB-KW"/>
</dbReference>
<dbReference type="GO" id="GO:0046872">
    <property type="term" value="F:metal ion binding"/>
    <property type="evidence" value="ECO:0007669"/>
    <property type="project" value="UniProtKB-KW"/>
</dbReference>
<dbReference type="Gene3D" id="1.10.246.10">
    <property type="match status" value="1"/>
</dbReference>
<dbReference type="InterPro" id="IPR014760">
    <property type="entry name" value="Serum_albumin_N"/>
</dbReference>
<dbReference type="PROSITE" id="PS51438">
    <property type="entry name" value="ALBUMIN_2"/>
    <property type="match status" value="1"/>
</dbReference>
<evidence type="ECO:0000250" key="1"/>
<evidence type="ECO:0000255" key="2">
    <source>
        <dbReference type="PROSITE-ProRule" id="PRU00769"/>
    </source>
</evidence>
<proteinExistence type="evidence at protein level"/>
<organism>
    <name type="scientific">Trachemys scripta</name>
    <name type="common">Red-eared slider turtle</name>
    <name type="synonym">Pseudemys scripta</name>
    <dbReference type="NCBI Taxonomy" id="34903"/>
    <lineage>
        <taxon>Eukaryota</taxon>
        <taxon>Metazoa</taxon>
        <taxon>Chordata</taxon>
        <taxon>Craniata</taxon>
        <taxon>Vertebrata</taxon>
        <taxon>Euteleostomi</taxon>
        <taxon>Archelosauria</taxon>
        <taxon>Testudinata</taxon>
        <taxon>Testudines</taxon>
        <taxon>Cryptodira</taxon>
        <taxon>Durocryptodira</taxon>
        <taxon>Testudinoidea</taxon>
        <taxon>Emydidae</taxon>
        <taxon>Trachemys</taxon>
    </lineage>
</organism>
<name>ALBU1_TRASC</name>
<accession>P81188</accession>
<sequence>DAEHKSEIVHRFNDLKEEKFKGAALITFAQFLHKKPEEEA</sequence>
<keyword id="KW-0186">Copper</keyword>
<keyword id="KW-0903">Direct protein sequencing</keyword>
<keyword id="KW-0446">Lipid-binding</keyword>
<keyword id="KW-0479">Metal-binding</keyword>
<keyword id="KW-0964">Secreted</keyword>
<comment type="function">
    <text>Serum albumin, the main protein of plasma, has a good binding capacity for water, Ca(2+), Na(+), K(+), fatty acids, hormones, bilirubin and drugs. Its main function is the regulation of the colloidal osmotic pressure of blood.</text>
</comment>
<comment type="subcellular location">
    <subcellularLocation>
        <location>Secreted</location>
    </subcellularLocation>
</comment>
<comment type="tissue specificity">
    <text>Plasma.</text>
</comment>
<comment type="miscellaneous">
    <text>In the red-eared slider turtle, there are two forms of albumin, ALB-1 and ALB-2.</text>
</comment>
<comment type="similarity">
    <text evidence="2">Belongs to the ALB/AFP/VDB family.</text>
</comment>